<reference key="1">
    <citation type="journal article" date="2005" name="Science">
        <title>The transcriptional landscape of the mammalian genome.</title>
        <authorList>
            <person name="Carninci P."/>
            <person name="Kasukawa T."/>
            <person name="Katayama S."/>
            <person name="Gough J."/>
            <person name="Frith M.C."/>
            <person name="Maeda N."/>
            <person name="Oyama R."/>
            <person name="Ravasi T."/>
            <person name="Lenhard B."/>
            <person name="Wells C."/>
            <person name="Kodzius R."/>
            <person name="Shimokawa K."/>
            <person name="Bajic V.B."/>
            <person name="Brenner S.E."/>
            <person name="Batalov S."/>
            <person name="Forrest A.R."/>
            <person name="Zavolan M."/>
            <person name="Davis M.J."/>
            <person name="Wilming L.G."/>
            <person name="Aidinis V."/>
            <person name="Allen J.E."/>
            <person name="Ambesi-Impiombato A."/>
            <person name="Apweiler R."/>
            <person name="Aturaliya R.N."/>
            <person name="Bailey T.L."/>
            <person name="Bansal M."/>
            <person name="Baxter L."/>
            <person name="Beisel K.W."/>
            <person name="Bersano T."/>
            <person name="Bono H."/>
            <person name="Chalk A.M."/>
            <person name="Chiu K.P."/>
            <person name="Choudhary V."/>
            <person name="Christoffels A."/>
            <person name="Clutterbuck D.R."/>
            <person name="Crowe M.L."/>
            <person name="Dalla E."/>
            <person name="Dalrymple B.P."/>
            <person name="de Bono B."/>
            <person name="Della Gatta G."/>
            <person name="di Bernardo D."/>
            <person name="Down T."/>
            <person name="Engstrom P."/>
            <person name="Fagiolini M."/>
            <person name="Faulkner G."/>
            <person name="Fletcher C.F."/>
            <person name="Fukushima T."/>
            <person name="Furuno M."/>
            <person name="Futaki S."/>
            <person name="Gariboldi M."/>
            <person name="Georgii-Hemming P."/>
            <person name="Gingeras T.R."/>
            <person name="Gojobori T."/>
            <person name="Green R.E."/>
            <person name="Gustincich S."/>
            <person name="Harbers M."/>
            <person name="Hayashi Y."/>
            <person name="Hensch T.K."/>
            <person name="Hirokawa N."/>
            <person name="Hill D."/>
            <person name="Huminiecki L."/>
            <person name="Iacono M."/>
            <person name="Ikeo K."/>
            <person name="Iwama A."/>
            <person name="Ishikawa T."/>
            <person name="Jakt M."/>
            <person name="Kanapin A."/>
            <person name="Katoh M."/>
            <person name="Kawasawa Y."/>
            <person name="Kelso J."/>
            <person name="Kitamura H."/>
            <person name="Kitano H."/>
            <person name="Kollias G."/>
            <person name="Krishnan S.P."/>
            <person name="Kruger A."/>
            <person name="Kummerfeld S.K."/>
            <person name="Kurochkin I.V."/>
            <person name="Lareau L.F."/>
            <person name="Lazarevic D."/>
            <person name="Lipovich L."/>
            <person name="Liu J."/>
            <person name="Liuni S."/>
            <person name="McWilliam S."/>
            <person name="Madan Babu M."/>
            <person name="Madera M."/>
            <person name="Marchionni L."/>
            <person name="Matsuda H."/>
            <person name="Matsuzawa S."/>
            <person name="Miki H."/>
            <person name="Mignone F."/>
            <person name="Miyake S."/>
            <person name="Morris K."/>
            <person name="Mottagui-Tabar S."/>
            <person name="Mulder N."/>
            <person name="Nakano N."/>
            <person name="Nakauchi H."/>
            <person name="Ng P."/>
            <person name="Nilsson R."/>
            <person name="Nishiguchi S."/>
            <person name="Nishikawa S."/>
            <person name="Nori F."/>
            <person name="Ohara O."/>
            <person name="Okazaki Y."/>
            <person name="Orlando V."/>
            <person name="Pang K.C."/>
            <person name="Pavan W.J."/>
            <person name="Pavesi G."/>
            <person name="Pesole G."/>
            <person name="Petrovsky N."/>
            <person name="Piazza S."/>
            <person name="Reed J."/>
            <person name="Reid J.F."/>
            <person name="Ring B.Z."/>
            <person name="Ringwald M."/>
            <person name="Rost B."/>
            <person name="Ruan Y."/>
            <person name="Salzberg S.L."/>
            <person name="Sandelin A."/>
            <person name="Schneider C."/>
            <person name="Schoenbach C."/>
            <person name="Sekiguchi K."/>
            <person name="Semple C.A."/>
            <person name="Seno S."/>
            <person name="Sessa L."/>
            <person name="Sheng Y."/>
            <person name="Shibata Y."/>
            <person name="Shimada H."/>
            <person name="Shimada K."/>
            <person name="Silva D."/>
            <person name="Sinclair B."/>
            <person name="Sperling S."/>
            <person name="Stupka E."/>
            <person name="Sugiura K."/>
            <person name="Sultana R."/>
            <person name="Takenaka Y."/>
            <person name="Taki K."/>
            <person name="Tammoja K."/>
            <person name="Tan S.L."/>
            <person name="Tang S."/>
            <person name="Taylor M.S."/>
            <person name="Tegner J."/>
            <person name="Teichmann S.A."/>
            <person name="Ueda H.R."/>
            <person name="van Nimwegen E."/>
            <person name="Verardo R."/>
            <person name="Wei C.L."/>
            <person name="Yagi K."/>
            <person name="Yamanishi H."/>
            <person name="Zabarovsky E."/>
            <person name="Zhu S."/>
            <person name="Zimmer A."/>
            <person name="Hide W."/>
            <person name="Bult C."/>
            <person name="Grimmond S.M."/>
            <person name="Teasdale R.D."/>
            <person name="Liu E.T."/>
            <person name="Brusic V."/>
            <person name="Quackenbush J."/>
            <person name="Wahlestedt C."/>
            <person name="Mattick J.S."/>
            <person name="Hume D.A."/>
            <person name="Kai C."/>
            <person name="Sasaki D."/>
            <person name="Tomaru Y."/>
            <person name="Fukuda S."/>
            <person name="Kanamori-Katayama M."/>
            <person name="Suzuki M."/>
            <person name="Aoki J."/>
            <person name="Arakawa T."/>
            <person name="Iida J."/>
            <person name="Imamura K."/>
            <person name="Itoh M."/>
            <person name="Kato T."/>
            <person name="Kawaji H."/>
            <person name="Kawagashira N."/>
            <person name="Kawashima T."/>
            <person name="Kojima M."/>
            <person name="Kondo S."/>
            <person name="Konno H."/>
            <person name="Nakano K."/>
            <person name="Ninomiya N."/>
            <person name="Nishio T."/>
            <person name="Okada M."/>
            <person name="Plessy C."/>
            <person name="Shibata K."/>
            <person name="Shiraki T."/>
            <person name="Suzuki S."/>
            <person name="Tagami M."/>
            <person name="Waki K."/>
            <person name="Watahiki A."/>
            <person name="Okamura-Oho Y."/>
            <person name="Suzuki H."/>
            <person name="Kawai J."/>
            <person name="Hayashizaki Y."/>
        </authorList>
    </citation>
    <scope>NUCLEOTIDE SEQUENCE [LARGE SCALE MRNA] (ISOFORM 2)</scope>
    <scope>NUCLEOTIDE SEQUENCE [LARGE SCALE MRNA] OF 1-354</scope>
    <source>
        <strain>C57BL/6J</strain>
        <tissue>Brain cortex</tissue>
        <tissue>Head</tissue>
        <tissue>Spinal cord</tissue>
    </source>
</reference>
<reference key="2">
    <citation type="journal article" date="2009" name="PLoS Biol.">
        <title>Lineage-specific biology revealed by a finished genome assembly of the mouse.</title>
        <authorList>
            <person name="Church D.M."/>
            <person name="Goodstadt L."/>
            <person name="Hillier L.W."/>
            <person name="Zody M.C."/>
            <person name="Goldstein S."/>
            <person name="She X."/>
            <person name="Bult C.J."/>
            <person name="Agarwala R."/>
            <person name="Cherry J.L."/>
            <person name="DiCuccio M."/>
            <person name="Hlavina W."/>
            <person name="Kapustin Y."/>
            <person name="Meric P."/>
            <person name="Maglott D."/>
            <person name="Birtle Z."/>
            <person name="Marques A.C."/>
            <person name="Graves T."/>
            <person name="Zhou S."/>
            <person name="Teague B."/>
            <person name="Potamousis K."/>
            <person name="Churas C."/>
            <person name="Place M."/>
            <person name="Herschleb J."/>
            <person name="Runnheim R."/>
            <person name="Forrest D."/>
            <person name="Amos-Landgraf J."/>
            <person name="Schwartz D.C."/>
            <person name="Cheng Z."/>
            <person name="Lindblad-Toh K."/>
            <person name="Eichler E.E."/>
            <person name="Ponting C.P."/>
        </authorList>
    </citation>
    <scope>NUCLEOTIDE SEQUENCE [LARGE SCALE GENOMIC DNA]</scope>
    <source>
        <strain>C57BL/6J</strain>
    </source>
</reference>
<reference key="3">
    <citation type="journal article" date="2004" name="Genome Res.">
        <title>The status, quality, and expansion of the NIH full-length cDNA project: the Mammalian Gene Collection (MGC).</title>
        <authorList>
            <consortium name="The MGC Project Team"/>
        </authorList>
    </citation>
    <scope>NUCLEOTIDE SEQUENCE [LARGE SCALE MRNA]</scope>
    <source>
        <tissue>Brain</tissue>
    </source>
</reference>
<reference key="4">
    <citation type="journal article" date="2004" name="DNA Res.">
        <title>Prediction of the coding sequences of mouse homologues of KIAA gene: IV. The complete nucleotide sequences of 500 mouse KIAA-homologous cDNAs identified by screening of terminal sequences of cDNA clones randomly sampled from size-fractionated libraries.</title>
        <authorList>
            <person name="Okazaki N."/>
            <person name="Kikuno R."/>
            <person name="Ohara R."/>
            <person name="Inamoto S."/>
            <person name="Koseki H."/>
            <person name="Hiraoka S."/>
            <person name="Saga Y."/>
            <person name="Seino S."/>
            <person name="Nishimura M."/>
            <person name="Kaisho T."/>
            <person name="Hoshino K."/>
            <person name="Kitamura H."/>
            <person name="Nagase T."/>
            <person name="Ohara O."/>
            <person name="Koga H."/>
        </authorList>
    </citation>
    <scope>NUCLEOTIDE SEQUENCE [LARGE SCALE MRNA] OF 75-819</scope>
    <source>
        <tissue>Pancreatic islet</tissue>
    </source>
</reference>
<reference key="5">
    <citation type="journal article" date="2010" name="Cell">
        <title>A tissue-specific atlas of mouse protein phosphorylation and expression.</title>
        <authorList>
            <person name="Huttlin E.L."/>
            <person name="Jedrychowski M.P."/>
            <person name="Elias J.E."/>
            <person name="Goswami T."/>
            <person name="Rad R."/>
            <person name="Beausoleil S.A."/>
            <person name="Villen J."/>
            <person name="Haas W."/>
            <person name="Sowa M.E."/>
            <person name="Gygi S.P."/>
        </authorList>
    </citation>
    <scope>IDENTIFICATION BY MASS SPECTROMETRY [LARGE SCALE ANALYSIS]</scope>
    <source>
        <tissue>Brain</tissue>
        <tissue>Pancreas</tissue>
        <tissue>Spleen</tissue>
    </source>
</reference>
<reference key="6">
    <citation type="journal article" date="2011" name="Immunity">
        <title>Control of B cell development by the histone H2A deubiquitinase MYSM1.</title>
        <authorList>
            <person name="Jiang X.X."/>
            <person name="Nguyen Q."/>
            <person name="Chou Y."/>
            <person name="Wang T."/>
            <person name="Nandakumar V."/>
            <person name="Yates P."/>
            <person name="Jones L."/>
            <person name="Wang L."/>
            <person name="Won H."/>
            <person name="Lee H.R."/>
            <person name="Jung J.U."/>
            <person name="Mueschen M."/>
            <person name="Huang X.F."/>
            <person name="Chen S.Y."/>
        </authorList>
    </citation>
    <scope>FUNCTION</scope>
    <scope>DISRUPTION PHENOTYPE</scope>
</reference>
<reference key="7">
    <citation type="journal article" date="2013" name="Proc. Natl. Acad. Sci. U.S.A.">
        <title>Epigenetic control of natural killer cell maturation by histone H2A deubiquitinase, MYSM1.</title>
        <authorList>
            <person name="Nandakumar V."/>
            <person name="Chou Y."/>
            <person name="Zang L."/>
            <person name="Huang X.F."/>
            <person name="Chen S.Y."/>
        </authorList>
    </citation>
    <scope>FUNCTION</scope>
    <scope>DISRUPTION PHENOTYPE</scope>
</reference>
<reference key="8">
    <citation type="journal article" date="2014" name="Blood">
        <title>Epigenetic control of dendritic cell development and fate determination of common myeloid progenitor by Mysm1.</title>
        <authorList>
            <person name="Won H."/>
            <person name="Nandakumar V."/>
            <person name="Yates P."/>
            <person name="Sanchez S."/>
            <person name="Jones L."/>
            <person name="Huang X.F."/>
            <person name="Chen S.Y."/>
        </authorList>
    </citation>
    <scope>FUNCTION</scope>
    <scope>DISRUPTION PHENOTYPE</scope>
</reference>
<reference key="9">
    <citation type="journal article" date="2015" name="Sci. Rep.">
        <title>Epigenetic Regulation of Antibody Responses by the Histone H2A Deubiquitinase MYSM1.</title>
        <authorList>
            <person name="Jiang X.X."/>
            <person name="Chou Y."/>
            <person name="Jones L."/>
            <person name="Wang T."/>
            <person name="Sanchez S."/>
            <person name="Huang X.F."/>
            <person name="Zhang L."/>
            <person name="Wang C."/>
            <person name="Chen S.Y."/>
        </authorList>
    </citation>
    <scope>FUNCTION</scope>
    <scope>DISRUPTION PHENOTYPE</scope>
</reference>
<reference key="10">
    <citation type="journal article" date="2015" name="Immunity">
        <title>Deubiquitinase MYSM1 Regulates Innate Immunity through Inactivation of TRAF3 and TRAF6 Complexes.</title>
        <authorList>
            <person name="Panda S."/>
            <person name="Nilsson J.A."/>
            <person name="Gekara N.O."/>
        </authorList>
    </citation>
    <scope>FUNCTION</scope>
    <scope>DISRUPTION PHENOTYPE</scope>
    <scope>SUBCELLULAR LOCATION</scope>
    <scope>CATALYTIC ACTIVITY</scope>
</reference>
<reference key="11">
    <citation type="journal article" date="2017" name="J. Leukoc. Biol.">
        <title>MYSM1-dependent checkpoints in B cell lineage differentiation and B cell-mediated immune response.</title>
        <authorList>
            <person name="Foerster M."/>
            <person name="Farrington K."/>
            <person name="Petrov J.C."/>
            <person name="Belle J.I."/>
            <person name="Mindt B.C."/>
            <person name="Witalis M."/>
            <person name="Duerr C.U."/>
            <person name="Fritz J.H."/>
            <person name="Nijnik A."/>
        </authorList>
    </citation>
    <scope>FUNCTION</scope>
    <scope>DISRUPTION PHENOTYPE</scope>
</reference>
<reference key="12">
    <citation type="journal article" date="2018" name="Nat. Commun.">
        <title>The deubiquitinase MYSM1 dampens NOD2-mediated inflammation and tissue damage by inactivating the RIP2 complex.</title>
        <authorList>
            <person name="Panda S."/>
            <person name="Gekara N.O."/>
        </authorList>
    </citation>
    <scope>FUNCTION</scope>
    <scope>SUBCELLULAR LOCATION</scope>
    <scope>DISRUPTION PHENOTYPE</scope>
</reference>
<reference key="13">
    <citation type="journal article" date="2020" name="Cell Rep.">
        <title>MYSM1 Represses Innate Immunity and Autoimmunity through Suppressing the cGAS-STING Pathway.</title>
        <authorList>
            <person name="Tian M."/>
            <person name="Liu W."/>
            <person name="Zhang Q."/>
            <person name="Huang Y."/>
            <person name="Li W."/>
            <person name="Wang W."/>
            <person name="Zhao P."/>
            <person name="Huang S."/>
            <person name="Song Y."/>
            <person name="Shereen M.A."/>
            <person name="Qin M."/>
            <person name="Liu Y."/>
            <person name="Wu K."/>
            <person name="Wu J."/>
        </authorList>
    </citation>
    <scope>FUNCTION</scope>
    <scope>DISRUPTION PHENOTYPE</scope>
</reference>
<accession>Q69Z66</accession>
<accession>A2AJE3</accession>
<accession>B9EKJ6</accession>
<accession>Q3TPV7</accession>
<accession>Q8BRP5</accession>
<accession>Q8C4N1</accession>
<name>MYSM1_MOUSE</name>
<comment type="function">
    <text evidence="2 6 7 8 9 10 11 12">Metalloprotease with deubiquitinase activity that plays important regulator roles in hematopoietic stem cell function, blood cell production and immune response (PubMed:26474655, PubMed:27895164, PubMed:30405132). Participates in the normal programming of B-cell responses to antigen after the maturation process (PubMed:27895164). Within the cytoplasm, plays critical roles in the repression of innate immunity and autoimmunity (PubMed:26474655, PubMed:30405132). Removes 'Lys-63'-linked polyubiquitins from TRAF3 and TRAF6 complexes (PubMed:26474655). Attenuates NOD2-mediated inflammation and tissue injury by promoting 'Lys-63'-linked deubiquitination of RIPK2 component (PubMed:30405132). Suppresses the CGAS-STING1 signaling pathway by cleaving STING1 'Lys-63'-linked ubiquitin chains (PubMed:33086059). In the nucleus, acts as a hematopoietic transcription regulator derepressing a range of genes essential for normal stem cell differentiation including EBF1 and PAX5 in B-cells, ID2 in NK-cell progenitor or FLT3 in dendritic cell precursors (PubMed:22169041, PubMed:24062447, PubMed:25217698, PubMed:26348977). Deubiquitinates monoubiquitinated histone H2A, a specific tag for epigenetic transcriptional repression, leading to dissociation of histone H1 from the nucleosome (By similarity).</text>
</comment>
<comment type="subunit">
    <text evidence="1">Component of a large chromatin remodeling complex, at least composed of MYSM1, PCAF, RBM10 and KIF11/TRIP5. Binds histones (By similarity).</text>
</comment>
<comment type="subcellular location">
    <subcellularLocation>
        <location evidence="10 12">Nucleus</location>
    </subcellularLocation>
    <subcellularLocation>
        <location evidence="10 12">Cytoplasm</location>
    </subcellularLocation>
    <text evidence="10">Localizes to the cytoplasm in response to bacterial infection.</text>
</comment>
<comment type="alternative products">
    <event type="alternative splicing"/>
    <isoform>
        <id>Q69Z66-1</id>
        <name>1</name>
        <sequence type="displayed"/>
    </isoform>
    <isoform>
        <id>Q69Z66-2</id>
        <name>2</name>
        <sequence type="described" ref="VSP_018212"/>
    </isoform>
</comment>
<comment type="domain">
    <text evidence="2">Contains an N-terminal SANT domain that mediates histone/DNA binding, a central SWIRM domain to mediate interaction with chromatin associated proteins, and a C-terminal MPN domain that contains the metalloprotease activity.</text>
</comment>
<comment type="disruption phenotype">
    <text evidence="6 7 8 9 10 11 12 13">Deficient mice elicit hyper-inflammatory responses, are more susceptible to septic shock, more resistant to RNA virus replication but exhibit early death upon DNA viral infection (PubMed:26474655, PubMed:33086059). They also show an impaired B-cell development (PubMed:22169041, PubMed:26348977, PubMed:27895164). In a similar way, NK-cell and dendritic cell development is impaired in deletion mutant (PubMed:24062447, PubMed:25217698). An enhanced systemic inflammation can be observed characterized by higher cytokine levels, as well as the hepatocellular enzyme alanine aminotransferase, a marker of liver damage (PubMed:30405132).</text>
</comment>
<comment type="similarity">
    <text evidence="15">Belongs to the peptidase M67A family. MYSM1 subfamily.</text>
</comment>
<organism>
    <name type="scientific">Mus musculus</name>
    <name type="common">Mouse</name>
    <dbReference type="NCBI Taxonomy" id="10090"/>
    <lineage>
        <taxon>Eukaryota</taxon>
        <taxon>Metazoa</taxon>
        <taxon>Chordata</taxon>
        <taxon>Craniata</taxon>
        <taxon>Vertebrata</taxon>
        <taxon>Euteleostomi</taxon>
        <taxon>Mammalia</taxon>
        <taxon>Eutheria</taxon>
        <taxon>Euarchontoglires</taxon>
        <taxon>Glires</taxon>
        <taxon>Rodentia</taxon>
        <taxon>Myomorpha</taxon>
        <taxon>Muroidea</taxon>
        <taxon>Muridae</taxon>
        <taxon>Murinae</taxon>
        <taxon>Mus</taxon>
        <taxon>Mus</taxon>
    </lineage>
</organism>
<dbReference type="EC" id="3.4.19.-" evidence="10"/>
<dbReference type="EMBL" id="AK043802">
    <property type="protein sequence ID" value="BAC31657.1"/>
    <property type="molecule type" value="mRNA"/>
</dbReference>
<dbReference type="EMBL" id="AK081684">
    <property type="protein sequence ID" value="BAC38291.1"/>
    <property type="molecule type" value="mRNA"/>
</dbReference>
<dbReference type="EMBL" id="AK164103">
    <property type="protein sequence ID" value="BAE37628.1"/>
    <property type="molecule type" value="mRNA"/>
</dbReference>
<dbReference type="EMBL" id="AL732611">
    <property type="status" value="NOT_ANNOTATED_CDS"/>
    <property type="molecule type" value="Genomic_DNA"/>
</dbReference>
<dbReference type="EMBL" id="BC150946">
    <property type="protein sequence ID" value="AAI50947.1"/>
    <property type="molecule type" value="mRNA"/>
</dbReference>
<dbReference type="EMBL" id="BC151172">
    <property type="protein sequence ID" value="AAI51173.1"/>
    <property type="molecule type" value="mRNA"/>
</dbReference>
<dbReference type="EMBL" id="AK173300">
    <property type="protein sequence ID" value="BAD32578.1"/>
    <property type="molecule type" value="mRNA"/>
</dbReference>
<dbReference type="CCDS" id="CCDS18363.1">
    <molecule id="Q69Z66-1"/>
</dbReference>
<dbReference type="RefSeq" id="NP_796213.2">
    <molecule id="Q69Z66-1"/>
    <property type="nucleotide sequence ID" value="NM_177239.4"/>
</dbReference>
<dbReference type="SMR" id="Q69Z66"/>
<dbReference type="BioGRID" id="236236">
    <property type="interactions" value="11"/>
</dbReference>
<dbReference type="FunCoup" id="Q69Z66">
    <property type="interactions" value="3493"/>
</dbReference>
<dbReference type="STRING" id="10090.ENSMUSP00000075269"/>
<dbReference type="MEROPS" id="M67.005"/>
<dbReference type="GlyGen" id="Q69Z66">
    <property type="glycosylation" value="1 site, 1 N-linked glycan (1 site)"/>
</dbReference>
<dbReference type="iPTMnet" id="Q69Z66"/>
<dbReference type="PhosphoSitePlus" id="Q69Z66"/>
<dbReference type="PaxDb" id="10090-ENSMUSP00000075269"/>
<dbReference type="PeptideAtlas" id="Q69Z66"/>
<dbReference type="ProteomicsDB" id="287600">
    <molecule id="Q69Z66-1"/>
</dbReference>
<dbReference type="ProteomicsDB" id="287601">
    <molecule id="Q69Z66-2"/>
</dbReference>
<dbReference type="Pumba" id="Q69Z66"/>
<dbReference type="Antibodypedia" id="46901">
    <property type="antibodies" value="273 antibodies from 30 providers"/>
</dbReference>
<dbReference type="DNASU" id="320713"/>
<dbReference type="Ensembl" id="ENSMUST00000075872.4">
    <molecule id="Q69Z66-1"/>
    <property type="protein sequence ID" value="ENSMUSP00000075269.4"/>
    <property type="gene ID" value="ENSMUSG00000062627.10"/>
</dbReference>
<dbReference type="GeneID" id="320713"/>
<dbReference type="KEGG" id="mmu:320713"/>
<dbReference type="UCSC" id="uc008tsn.1">
    <molecule id="Q69Z66-1"/>
    <property type="organism name" value="mouse"/>
</dbReference>
<dbReference type="AGR" id="MGI:2444584"/>
<dbReference type="CTD" id="114803"/>
<dbReference type="MGI" id="MGI:2444584">
    <property type="gene designation" value="Mysm1"/>
</dbReference>
<dbReference type="VEuPathDB" id="HostDB:ENSMUSG00000062627"/>
<dbReference type="eggNOG" id="KOG1279">
    <property type="taxonomic scope" value="Eukaryota"/>
</dbReference>
<dbReference type="eggNOG" id="KOG1555">
    <property type="taxonomic scope" value="Eukaryota"/>
</dbReference>
<dbReference type="GeneTree" id="ENSGT00940000157721"/>
<dbReference type="HOGENOM" id="CLU_018854_0_0_1"/>
<dbReference type="InParanoid" id="Q69Z66"/>
<dbReference type="OMA" id="QDHYLES"/>
<dbReference type="OrthoDB" id="7464992at2759"/>
<dbReference type="PhylomeDB" id="Q69Z66"/>
<dbReference type="TreeFam" id="TF324811"/>
<dbReference type="Reactome" id="R-MMU-5689901">
    <property type="pathway name" value="Metalloprotease DUBs"/>
</dbReference>
<dbReference type="BioGRID-ORCS" id="320713">
    <property type="hits" value="0 hits in 65 CRISPR screens"/>
</dbReference>
<dbReference type="ChiTaRS" id="Mysm1">
    <property type="organism name" value="mouse"/>
</dbReference>
<dbReference type="PRO" id="PR:Q69Z66"/>
<dbReference type="Proteomes" id="UP000000589">
    <property type="component" value="Chromosome 4"/>
</dbReference>
<dbReference type="RNAct" id="Q69Z66">
    <property type="molecule type" value="protein"/>
</dbReference>
<dbReference type="Bgee" id="ENSMUSG00000062627">
    <property type="expression patterns" value="Expressed in animal zygote and 221 other cell types or tissues"/>
</dbReference>
<dbReference type="GO" id="GO:0005737">
    <property type="term" value="C:cytoplasm"/>
    <property type="evidence" value="ECO:0007669"/>
    <property type="project" value="UniProtKB-SubCell"/>
</dbReference>
<dbReference type="GO" id="GO:0005730">
    <property type="term" value="C:nucleolus"/>
    <property type="evidence" value="ECO:0007669"/>
    <property type="project" value="Ensembl"/>
</dbReference>
<dbReference type="GO" id="GO:0005654">
    <property type="term" value="C:nucleoplasm"/>
    <property type="evidence" value="ECO:0007669"/>
    <property type="project" value="Ensembl"/>
</dbReference>
<dbReference type="GO" id="GO:0005634">
    <property type="term" value="C:nucleus"/>
    <property type="evidence" value="ECO:0000250"/>
    <property type="project" value="UniProtKB"/>
</dbReference>
<dbReference type="GO" id="GO:0032991">
    <property type="term" value="C:protein-containing complex"/>
    <property type="evidence" value="ECO:0007669"/>
    <property type="project" value="Ensembl"/>
</dbReference>
<dbReference type="GO" id="GO:0003677">
    <property type="term" value="F:DNA binding"/>
    <property type="evidence" value="ECO:0007669"/>
    <property type="project" value="UniProtKB-KW"/>
</dbReference>
<dbReference type="GO" id="GO:0042393">
    <property type="term" value="F:histone binding"/>
    <property type="evidence" value="ECO:0000250"/>
    <property type="project" value="UniProtKB"/>
</dbReference>
<dbReference type="GO" id="GO:0140950">
    <property type="term" value="F:histone H2A deubiquitinase activity"/>
    <property type="evidence" value="ECO:0000250"/>
    <property type="project" value="UniProtKB"/>
</dbReference>
<dbReference type="GO" id="GO:0046872">
    <property type="term" value="F:metal ion binding"/>
    <property type="evidence" value="ECO:0007669"/>
    <property type="project" value="UniProtKB-KW"/>
</dbReference>
<dbReference type="GO" id="GO:0140492">
    <property type="term" value="F:metal-dependent deubiquitinase activity"/>
    <property type="evidence" value="ECO:0000250"/>
    <property type="project" value="UniProtKB"/>
</dbReference>
<dbReference type="GO" id="GO:0003713">
    <property type="term" value="F:transcription coactivator activity"/>
    <property type="evidence" value="ECO:0000250"/>
    <property type="project" value="UniProtKB"/>
</dbReference>
<dbReference type="GO" id="GO:0006338">
    <property type="term" value="P:chromatin remodeling"/>
    <property type="evidence" value="ECO:0000250"/>
    <property type="project" value="UniProtKB"/>
</dbReference>
<dbReference type="GO" id="GO:0002376">
    <property type="term" value="P:immune system process"/>
    <property type="evidence" value="ECO:0007669"/>
    <property type="project" value="UniProtKB-KW"/>
</dbReference>
<dbReference type="GO" id="GO:0043473">
    <property type="term" value="P:pigmentation"/>
    <property type="evidence" value="ECO:0000315"/>
    <property type="project" value="MGI"/>
</dbReference>
<dbReference type="GO" id="GO:0045944">
    <property type="term" value="P:positive regulation of transcription by RNA polymerase II"/>
    <property type="evidence" value="ECO:0000250"/>
    <property type="project" value="UniProtKB"/>
</dbReference>
<dbReference type="GO" id="GO:0006508">
    <property type="term" value="P:proteolysis"/>
    <property type="evidence" value="ECO:0007669"/>
    <property type="project" value="UniProtKB-KW"/>
</dbReference>
<dbReference type="GO" id="GO:0030334">
    <property type="term" value="P:regulation of cell migration"/>
    <property type="evidence" value="ECO:0000315"/>
    <property type="project" value="MGI"/>
</dbReference>
<dbReference type="GO" id="GO:0051797">
    <property type="term" value="P:regulation of hair follicle development"/>
    <property type="evidence" value="ECO:0000315"/>
    <property type="project" value="MGI"/>
</dbReference>
<dbReference type="GO" id="GO:1903706">
    <property type="term" value="P:regulation of hemopoiesis"/>
    <property type="evidence" value="ECO:0000250"/>
    <property type="project" value="UniProtKB"/>
</dbReference>
<dbReference type="CDD" id="cd08067">
    <property type="entry name" value="MPN_2A_DUB"/>
    <property type="match status" value="1"/>
</dbReference>
<dbReference type="CDD" id="cd00167">
    <property type="entry name" value="SANT"/>
    <property type="match status" value="1"/>
</dbReference>
<dbReference type="FunFam" id="1.10.10.10:FF:000193">
    <property type="entry name" value="histone H2A deubiquitinase MYSM1 isoform X1"/>
    <property type="match status" value="1"/>
</dbReference>
<dbReference type="FunFam" id="1.10.10.60:FF:000151">
    <property type="entry name" value="histone H2A deubiquitinase MYSM1 isoform X2"/>
    <property type="match status" value="1"/>
</dbReference>
<dbReference type="FunFam" id="3.40.140.10:FF:000018">
    <property type="entry name" value="histone H2A deubiquitinase MYSM1 isoform X2"/>
    <property type="match status" value="1"/>
</dbReference>
<dbReference type="Gene3D" id="3.40.140.10">
    <property type="entry name" value="Cytidine Deaminase, domain 2"/>
    <property type="match status" value="1"/>
</dbReference>
<dbReference type="Gene3D" id="1.10.10.60">
    <property type="entry name" value="Homeodomain-like"/>
    <property type="match status" value="1"/>
</dbReference>
<dbReference type="Gene3D" id="1.10.10.10">
    <property type="entry name" value="Winged helix-like DNA-binding domain superfamily/Winged helix DNA-binding domain"/>
    <property type="match status" value="1"/>
</dbReference>
<dbReference type="InterPro" id="IPR009057">
    <property type="entry name" value="Homeodomain-like_sf"/>
</dbReference>
<dbReference type="InterPro" id="IPR000555">
    <property type="entry name" value="JAMM/MPN+_dom"/>
</dbReference>
<dbReference type="InterPro" id="IPR050242">
    <property type="entry name" value="JAMM_MPN+_peptidase_M67A"/>
</dbReference>
<dbReference type="InterPro" id="IPR037518">
    <property type="entry name" value="MPN"/>
</dbReference>
<dbReference type="InterPro" id="IPR017930">
    <property type="entry name" value="Myb_dom"/>
</dbReference>
<dbReference type="InterPro" id="IPR001005">
    <property type="entry name" value="SANT/Myb"/>
</dbReference>
<dbReference type="InterPro" id="IPR017884">
    <property type="entry name" value="SANT_dom"/>
</dbReference>
<dbReference type="InterPro" id="IPR007526">
    <property type="entry name" value="SWIRM"/>
</dbReference>
<dbReference type="InterPro" id="IPR036388">
    <property type="entry name" value="WH-like_DNA-bd_sf"/>
</dbReference>
<dbReference type="PANTHER" id="PTHR10410">
    <property type="entry name" value="EUKARYOTIC TRANSLATION INITIATION FACTOR 3 -RELATED"/>
    <property type="match status" value="1"/>
</dbReference>
<dbReference type="Pfam" id="PF01398">
    <property type="entry name" value="JAB"/>
    <property type="match status" value="1"/>
</dbReference>
<dbReference type="Pfam" id="PF00249">
    <property type="entry name" value="Myb_DNA-binding"/>
    <property type="match status" value="1"/>
</dbReference>
<dbReference type="Pfam" id="PF04433">
    <property type="entry name" value="SWIRM"/>
    <property type="match status" value="1"/>
</dbReference>
<dbReference type="SMART" id="SM00232">
    <property type="entry name" value="JAB_MPN"/>
    <property type="match status" value="1"/>
</dbReference>
<dbReference type="SMART" id="SM00717">
    <property type="entry name" value="SANT"/>
    <property type="match status" value="1"/>
</dbReference>
<dbReference type="SUPFAM" id="SSF46689">
    <property type="entry name" value="Homeodomain-like"/>
    <property type="match status" value="2"/>
</dbReference>
<dbReference type="SUPFAM" id="SSF102712">
    <property type="entry name" value="JAB1/MPN domain"/>
    <property type="match status" value="1"/>
</dbReference>
<dbReference type="PROSITE" id="PS50249">
    <property type="entry name" value="MPN"/>
    <property type="match status" value="1"/>
</dbReference>
<dbReference type="PROSITE" id="PS50934">
    <property type="entry name" value="SWIRM"/>
    <property type="match status" value="1"/>
</dbReference>
<proteinExistence type="evidence at protein level"/>
<evidence type="ECO:0000250" key="1"/>
<evidence type="ECO:0000250" key="2">
    <source>
        <dbReference type="UniProtKB" id="Q5VVJ2"/>
    </source>
</evidence>
<evidence type="ECO:0000255" key="3">
    <source>
        <dbReference type="PROSITE-ProRule" id="PRU00247"/>
    </source>
</evidence>
<evidence type="ECO:0000255" key="4">
    <source>
        <dbReference type="PROSITE-ProRule" id="PRU01182"/>
    </source>
</evidence>
<evidence type="ECO:0000256" key="5">
    <source>
        <dbReference type="SAM" id="MobiDB-lite"/>
    </source>
</evidence>
<evidence type="ECO:0000269" key="6">
    <source>
    </source>
</evidence>
<evidence type="ECO:0000269" key="7">
    <source>
    </source>
</evidence>
<evidence type="ECO:0000269" key="8">
    <source>
    </source>
</evidence>
<evidence type="ECO:0000269" key="9">
    <source>
    </source>
</evidence>
<evidence type="ECO:0000269" key="10">
    <source>
    </source>
</evidence>
<evidence type="ECO:0000269" key="11">
    <source>
    </source>
</evidence>
<evidence type="ECO:0000269" key="12">
    <source>
    </source>
</evidence>
<evidence type="ECO:0000269" key="13">
    <source>
    </source>
</evidence>
<evidence type="ECO:0000303" key="14">
    <source>
    </source>
</evidence>
<evidence type="ECO:0000305" key="15"/>
<protein>
    <recommendedName>
        <fullName>Deubiquitinase MYSM1</fullName>
        <shortName>2A-DUB</shortName>
        <ecNumber evidence="10">3.4.19.-</ecNumber>
    </recommendedName>
    <alternativeName>
        <fullName>Myb-like, SWIRM and MPN domain-containing protein 1</fullName>
    </alternativeName>
</protein>
<gene>
    <name type="primary">Mysm1</name>
    <name type="synonym">Kiaa1915</name>
</gene>
<keyword id="KW-0010">Activator</keyword>
<keyword id="KW-0025">Alternative splicing</keyword>
<keyword id="KW-0156">Chromatin regulator</keyword>
<keyword id="KW-0963">Cytoplasm</keyword>
<keyword id="KW-0238">DNA-binding</keyword>
<keyword id="KW-0378">Hydrolase</keyword>
<keyword id="KW-0391">Immunity</keyword>
<keyword id="KW-1017">Isopeptide bond</keyword>
<keyword id="KW-0479">Metal-binding</keyword>
<keyword id="KW-0482">Metalloprotease</keyword>
<keyword id="KW-0539">Nucleus</keyword>
<keyword id="KW-0597">Phosphoprotein</keyword>
<keyword id="KW-0645">Protease</keyword>
<keyword id="KW-1185">Reference proteome</keyword>
<keyword id="KW-0804">Transcription</keyword>
<keyword id="KW-0805">Transcription regulation</keyword>
<keyword id="KW-0832">Ubl conjugation</keyword>
<keyword id="KW-0833">Ubl conjugation pathway</keyword>
<keyword id="KW-0862">Zinc</keyword>
<feature type="chain" id="PRO_0000234074" description="Deubiquitinase MYSM1">
    <location>
        <begin position="1"/>
        <end position="819"/>
    </location>
</feature>
<feature type="domain" description="SANT">
    <location>
        <begin position="113"/>
        <end position="164"/>
    </location>
</feature>
<feature type="domain" description="SWIRM" evidence="3">
    <location>
        <begin position="363"/>
        <end position="461"/>
    </location>
</feature>
<feature type="domain" description="MPN" evidence="4">
    <location>
        <begin position="568"/>
        <end position="700"/>
    </location>
</feature>
<feature type="region of interest" description="Disordered" evidence="5">
    <location>
        <begin position="1"/>
        <end position="29"/>
    </location>
</feature>
<feature type="region of interest" description="Disordered" evidence="5">
    <location>
        <begin position="228"/>
        <end position="247"/>
    </location>
</feature>
<feature type="region of interest" description="Disordered" evidence="5">
    <location>
        <begin position="260"/>
        <end position="279"/>
    </location>
</feature>
<feature type="region of interest" description="Disordered" evidence="5">
    <location>
        <begin position="318"/>
        <end position="347"/>
    </location>
</feature>
<feature type="short sequence motif" description="JAMM motif" evidence="4">
    <location>
        <begin position="647"/>
        <end position="660"/>
    </location>
</feature>
<feature type="short sequence motif" description="LXXLL motif">
    <location>
        <begin position="765"/>
        <end position="769"/>
    </location>
</feature>
<feature type="compositionally biased region" description="Acidic residues" evidence="5">
    <location>
        <begin position="1"/>
        <end position="12"/>
    </location>
</feature>
<feature type="compositionally biased region" description="Polar residues" evidence="5">
    <location>
        <begin position="230"/>
        <end position="240"/>
    </location>
</feature>
<feature type="compositionally biased region" description="Basic and acidic residues" evidence="5">
    <location>
        <begin position="318"/>
        <end position="340"/>
    </location>
</feature>
<feature type="binding site" evidence="4">
    <location>
        <position position="647"/>
    </location>
    <ligand>
        <name>Zn(2+)</name>
        <dbReference type="ChEBI" id="CHEBI:29105"/>
        <note>catalytic</note>
    </ligand>
</feature>
<feature type="binding site" evidence="4">
    <location>
        <position position="649"/>
    </location>
    <ligand>
        <name>Zn(2+)</name>
        <dbReference type="ChEBI" id="CHEBI:29105"/>
        <note>catalytic</note>
    </ligand>
</feature>
<feature type="binding site" evidence="4">
    <location>
        <position position="660"/>
    </location>
    <ligand>
        <name>Zn(2+)</name>
        <dbReference type="ChEBI" id="CHEBI:29105"/>
        <note>catalytic</note>
    </ligand>
</feature>
<feature type="modified residue" description="Phosphoserine" evidence="2">
    <location>
        <position position="107"/>
    </location>
</feature>
<feature type="modified residue" description="Phosphoserine" evidence="2">
    <location>
        <position position="215"/>
    </location>
</feature>
<feature type="modified residue" description="Phosphothreonine" evidence="2">
    <location>
        <position position="233"/>
    </location>
</feature>
<feature type="modified residue" description="Phosphoserine" evidence="2">
    <location>
        <position position="332"/>
    </location>
</feature>
<feature type="cross-link" description="Glycyl lysine isopeptide (Lys-Gly) (interchain with G-Cter in SUMO2)" evidence="2">
    <location>
        <position position="184"/>
    </location>
</feature>
<feature type="splice variant" id="VSP_018212" description="In isoform 2." evidence="14">
    <location>
        <begin position="412"/>
        <end position="819"/>
    </location>
</feature>
<feature type="sequence conflict" description="In Ref. 1; BAE37628." evidence="15" ref="1">
    <original>D</original>
    <variation>G</variation>
    <location>
        <position position="7"/>
    </location>
</feature>
<feature type="sequence conflict" description="In Ref. 1; BAC31657." evidence="15" ref="1">
    <original>Q</original>
    <variation>H</variation>
    <location>
        <position position="175"/>
    </location>
</feature>
<feature type="sequence conflict" description="In Ref. 1; BAE37628." evidence="15" ref="1">
    <original>D</original>
    <variation>H</variation>
    <location>
        <position position="221"/>
    </location>
</feature>
<feature type="sequence conflict" description="In Ref. 1; BAE37628." evidence="15" ref="1">
    <original>A</original>
    <variation>P</variation>
    <location>
        <position position="265"/>
    </location>
</feature>
<sequence length="819" mass="93475">MEAEEADVDVEGDVAAAAQPGNDESTASVFQDHYLDSTWRRENGCLPWTLDSTISDENRAIIEKMLLEEEYYLSNKSLPGKFWVNQKEDNKKYTNSLQKSSKAMVDSPAKPASHSVKWTVEEKELFEQGLAKFGRRWTKIATLLKSRTVLQVKSYARQYFKNKVKWDVEKETPTQKSSSDLQVKNKDDRTKAWAAACLRGSADPCLNAVKIEKLSDDEDVDITDELDELTSQTSQNSGSHLTLDVPNSKMYTTNQGELCQEGPLAKSSGESLQNVKQGEGEACSSSEIASWAEKQKSTDKNSAELNEKYNKVVEEHTLHRGEVREEAKHSPSPEPCERQDSSGNEMLLPPCQIEEENHEGEELKPPEQEVEIDRNVIQEEEKQAIPEFFEGRQTKTPERYLKIRNYILDQWEICKPKYLNKTSVRPGLKNCGDVNCIGRIHTYLELIGAINFGCEQAVYNRPQPLDKVRAADRKDAEAAYQLAWRLQSMRTRRRRVRDPWGNWCDAKDLEGQTFEHLSVEEMARRKEEEKCKPIKFSKASKLPKSSLDPFQLIPCNFFSEEKQEPFQVKVAAEALLIMNLHAHVSMAEVIGLLGGRYSEADKVLEVCAAEPCNSLSTGLQCEMDPVSQTQASETLALRGYSVIGWYHSHPAFDPNPSLRDIDTQAKYQSYFSRGGAKFIGMIVSPYNRSNPLPYSQITCLVISEEVSPDGTYRLPYKFEVQQMLEEPQWELVFEKTRWIIEKYRLSNSSVPMDRIFRRDSDLTCLQKLLECLRKTLSKVANCFIAEEFLTQIENLFLSNYKSKEENGLAEEDSTKELFM</sequence>